<evidence type="ECO:0000255" key="1">
    <source>
        <dbReference type="HAMAP-Rule" id="MF_01320"/>
    </source>
</evidence>
<evidence type="ECO:0000256" key="2">
    <source>
        <dbReference type="SAM" id="MobiDB-lite"/>
    </source>
</evidence>
<evidence type="ECO:0000305" key="3"/>
<comment type="function">
    <text evidence="1">One of the primary rRNA binding proteins. Required for association of the 30S and 50S subunits to form the 70S ribosome, for tRNA binding and peptide bond formation. It has been suggested to have peptidyltransferase activity; this is somewhat controversial. Makes several contacts with the 16S rRNA in the 70S ribosome.</text>
</comment>
<comment type="subunit">
    <text evidence="1">Part of the 50S ribosomal subunit. Forms a bridge to the 30S subunit in the 70S ribosome.</text>
</comment>
<comment type="similarity">
    <text evidence="1">Belongs to the universal ribosomal protein uL2 family.</text>
</comment>
<gene>
    <name evidence="1" type="primary">rplB</name>
    <name type="ordered locus">NFA_7360</name>
</gene>
<proteinExistence type="inferred from homology"/>
<reference key="1">
    <citation type="journal article" date="2004" name="Proc. Natl. Acad. Sci. U.S.A.">
        <title>The complete genomic sequence of Nocardia farcinica IFM 10152.</title>
        <authorList>
            <person name="Ishikawa J."/>
            <person name="Yamashita A."/>
            <person name="Mikami Y."/>
            <person name="Hoshino Y."/>
            <person name="Kurita H."/>
            <person name="Hotta K."/>
            <person name="Shiba T."/>
            <person name="Hattori M."/>
        </authorList>
    </citation>
    <scope>NUCLEOTIDE SEQUENCE [LARGE SCALE GENOMIC DNA]</scope>
    <source>
        <strain>IFM 10152</strain>
    </source>
</reference>
<organism>
    <name type="scientific">Nocardia farcinica (strain IFM 10152)</name>
    <dbReference type="NCBI Taxonomy" id="247156"/>
    <lineage>
        <taxon>Bacteria</taxon>
        <taxon>Bacillati</taxon>
        <taxon>Actinomycetota</taxon>
        <taxon>Actinomycetes</taxon>
        <taxon>Mycobacteriales</taxon>
        <taxon>Nocardiaceae</taxon>
        <taxon>Nocardia</taxon>
    </lineage>
</organism>
<accession>Q5Z1W0</accession>
<protein>
    <recommendedName>
        <fullName evidence="1">Large ribosomal subunit protein uL2</fullName>
    </recommendedName>
    <alternativeName>
        <fullName evidence="3">50S ribosomal protein L2</fullName>
    </alternativeName>
</protein>
<dbReference type="EMBL" id="AP006618">
    <property type="protein sequence ID" value="BAD55581.1"/>
    <property type="molecule type" value="Genomic_DNA"/>
</dbReference>
<dbReference type="RefSeq" id="WP_011207267.1">
    <property type="nucleotide sequence ID" value="NC_006361.1"/>
</dbReference>
<dbReference type="SMR" id="Q5Z1W0"/>
<dbReference type="STRING" id="247156.NFA_7360"/>
<dbReference type="GeneID" id="61131567"/>
<dbReference type="KEGG" id="nfa:NFA_7360"/>
<dbReference type="eggNOG" id="COG0090">
    <property type="taxonomic scope" value="Bacteria"/>
</dbReference>
<dbReference type="HOGENOM" id="CLU_036235_2_1_11"/>
<dbReference type="OrthoDB" id="9778722at2"/>
<dbReference type="Proteomes" id="UP000006820">
    <property type="component" value="Chromosome"/>
</dbReference>
<dbReference type="GO" id="GO:0015934">
    <property type="term" value="C:large ribosomal subunit"/>
    <property type="evidence" value="ECO:0007669"/>
    <property type="project" value="InterPro"/>
</dbReference>
<dbReference type="GO" id="GO:0019843">
    <property type="term" value="F:rRNA binding"/>
    <property type="evidence" value="ECO:0007669"/>
    <property type="project" value="UniProtKB-UniRule"/>
</dbReference>
<dbReference type="GO" id="GO:0003735">
    <property type="term" value="F:structural constituent of ribosome"/>
    <property type="evidence" value="ECO:0007669"/>
    <property type="project" value="InterPro"/>
</dbReference>
<dbReference type="GO" id="GO:0016740">
    <property type="term" value="F:transferase activity"/>
    <property type="evidence" value="ECO:0007669"/>
    <property type="project" value="InterPro"/>
</dbReference>
<dbReference type="GO" id="GO:0002181">
    <property type="term" value="P:cytoplasmic translation"/>
    <property type="evidence" value="ECO:0007669"/>
    <property type="project" value="TreeGrafter"/>
</dbReference>
<dbReference type="FunFam" id="2.30.30.30:FF:000001">
    <property type="entry name" value="50S ribosomal protein L2"/>
    <property type="match status" value="1"/>
</dbReference>
<dbReference type="FunFam" id="2.40.50.140:FF:000003">
    <property type="entry name" value="50S ribosomal protein L2"/>
    <property type="match status" value="1"/>
</dbReference>
<dbReference type="FunFam" id="4.10.950.10:FF:000001">
    <property type="entry name" value="50S ribosomal protein L2"/>
    <property type="match status" value="1"/>
</dbReference>
<dbReference type="Gene3D" id="2.30.30.30">
    <property type="match status" value="1"/>
</dbReference>
<dbReference type="Gene3D" id="2.40.50.140">
    <property type="entry name" value="Nucleic acid-binding proteins"/>
    <property type="match status" value="1"/>
</dbReference>
<dbReference type="Gene3D" id="4.10.950.10">
    <property type="entry name" value="Ribosomal protein L2, domain 3"/>
    <property type="match status" value="1"/>
</dbReference>
<dbReference type="HAMAP" id="MF_01320_B">
    <property type="entry name" value="Ribosomal_uL2_B"/>
    <property type="match status" value="1"/>
</dbReference>
<dbReference type="InterPro" id="IPR012340">
    <property type="entry name" value="NA-bd_OB-fold"/>
</dbReference>
<dbReference type="InterPro" id="IPR014722">
    <property type="entry name" value="Rib_uL2_dom2"/>
</dbReference>
<dbReference type="InterPro" id="IPR002171">
    <property type="entry name" value="Ribosomal_uL2"/>
</dbReference>
<dbReference type="InterPro" id="IPR005880">
    <property type="entry name" value="Ribosomal_uL2_bac/org-type"/>
</dbReference>
<dbReference type="InterPro" id="IPR022669">
    <property type="entry name" value="Ribosomal_uL2_C"/>
</dbReference>
<dbReference type="InterPro" id="IPR022671">
    <property type="entry name" value="Ribosomal_uL2_CS"/>
</dbReference>
<dbReference type="InterPro" id="IPR014726">
    <property type="entry name" value="Ribosomal_uL2_dom3"/>
</dbReference>
<dbReference type="InterPro" id="IPR022666">
    <property type="entry name" value="Ribosomal_uL2_RNA-bd_dom"/>
</dbReference>
<dbReference type="InterPro" id="IPR008991">
    <property type="entry name" value="Translation_prot_SH3-like_sf"/>
</dbReference>
<dbReference type="NCBIfam" id="TIGR01171">
    <property type="entry name" value="rplB_bact"/>
    <property type="match status" value="1"/>
</dbReference>
<dbReference type="PANTHER" id="PTHR13691:SF5">
    <property type="entry name" value="LARGE RIBOSOMAL SUBUNIT PROTEIN UL2M"/>
    <property type="match status" value="1"/>
</dbReference>
<dbReference type="PANTHER" id="PTHR13691">
    <property type="entry name" value="RIBOSOMAL PROTEIN L2"/>
    <property type="match status" value="1"/>
</dbReference>
<dbReference type="Pfam" id="PF00181">
    <property type="entry name" value="Ribosomal_L2"/>
    <property type="match status" value="1"/>
</dbReference>
<dbReference type="Pfam" id="PF03947">
    <property type="entry name" value="Ribosomal_L2_C"/>
    <property type="match status" value="1"/>
</dbReference>
<dbReference type="PIRSF" id="PIRSF002158">
    <property type="entry name" value="Ribosomal_L2"/>
    <property type="match status" value="1"/>
</dbReference>
<dbReference type="SMART" id="SM01383">
    <property type="entry name" value="Ribosomal_L2"/>
    <property type="match status" value="1"/>
</dbReference>
<dbReference type="SMART" id="SM01382">
    <property type="entry name" value="Ribosomal_L2_C"/>
    <property type="match status" value="1"/>
</dbReference>
<dbReference type="SUPFAM" id="SSF50249">
    <property type="entry name" value="Nucleic acid-binding proteins"/>
    <property type="match status" value="1"/>
</dbReference>
<dbReference type="SUPFAM" id="SSF50104">
    <property type="entry name" value="Translation proteins SH3-like domain"/>
    <property type="match status" value="1"/>
</dbReference>
<dbReference type="PROSITE" id="PS00467">
    <property type="entry name" value="RIBOSOMAL_L2"/>
    <property type="match status" value="1"/>
</dbReference>
<feature type="chain" id="PRO_0000237218" description="Large ribosomal subunit protein uL2">
    <location>
        <begin position="1"/>
        <end position="278"/>
    </location>
</feature>
<feature type="region of interest" description="Disordered" evidence="2">
    <location>
        <begin position="1"/>
        <end position="20"/>
    </location>
</feature>
<feature type="region of interest" description="Disordered" evidence="2">
    <location>
        <begin position="25"/>
        <end position="57"/>
    </location>
</feature>
<feature type="region of interest" description="Disordered" evidence="2">
    <location>
        <begin position="224"/>
        <end position="278"/>
    </location>
</feature>
<feature type="compositionally biased region" description="Basic residues" evidence="2">
    <location>
        <begin position="45"/>
        <end position="57"/>
    </location>
</feature>
<feature type="compositionally biased region" description="Basic residues" evidence="2">
    <location>
        <begin position="269"/>
        <end position="278"/>
    </location>
</feature>
<sequence length="278" mass="30484">MAIRKYKPTTPGRRGSSVSDFAEITRSTPEKSLLRPLTKSGGRNAHGRITTRHRGGGHKRAYRVIDFRRLDKDGIPAKVAHIEYDPNRTANIALLHYVDGEKRYILAPKGVTQGTPIESGPTADIKPGNNLPLRNIPTGTTIHNVELRPGGGAKLARAAGMSIQLLGKEGPYATLRMPSGEIRRVDVRCRATVGEVGNAEQSNINWGKAGRMRWKGRRPTVRGVVMNPVDHPHGGGEGKTSGGRHPVSPWGQPEGRTRKPNRPSDKLIVRRRKTGKKR</sequence>
<name>RL2_NOCFA</name>
<keyword id="KW-1185">Reference proteome</keyword>
<keyword id="KW-0687">Ribonucleoprotein</keyword>
<keyword id="KW-0689">Ribosomal protein</keyword>
<keyword id="KW-0694">RNA-binding</keyword>
<keyword id="KW-0699">rRNA-binding</keyword>